<organism>
    <name type="scientific">Saccharomyces cerevisiae (strain ATCC 204508 / S288c)</name>
    <name type="common">Baker's yeast</name>
    <dbReference type="NCBI Taxonomy" id="559292"/>
    <lineage>
        <taxon>Eukaryota</taxon>
        <taxon>Fungi</taxon>
        <taxon>Dikarya</taxon>
        <taxon>Ascomycota</taxon>
        <taxon>Saccharomycotina</taxon>
        <taxon>Saccharomycetes</taxon>
        <taxon>Saccharomycetales</taxon>
        <taxon>Saccharomycetaceae</taxon>
        <taxon>Saccharomyces</taxon>
    </lineage>
</organism>
<gene>
    <name type="primary">RPN8</name>
    <name type="ordered locus">YOR261C</name>
    <name type="ORF">O5360</name>
</gene>
<feature type="initiator methionine" description="Removed" evidence="3">
    <location>
        <position position="1"/>
    </location>
</feature>
<feature type="chain" id="PRO_0000213951" description="26S proteasome regulatory subunit RPN8">
    <location>
        <begin position="2"/>
        <end position="338"/>
    </location>
</feature>
<feature type="domain" description="MPN" evidence="1">
    <location>
        <begin position="8"/>
        <end position="143"/>
    </location>
</feature>
<feature type="region of interest" description="Disordered" evidence="2">
    <location>
        <begin position="301"/>
        <end position="338"/>
    </location>
</feature>
<feature type="compositionally biased region" description="Basic and acidic residues" evidence="2">
    <location>
        <begin position="301"/>
        <end position="326"/>
    </location>
</feature>
<feature type="modified residue" description="N-acetylserine" evidence="3">
    <location>
        <position position="2"/>
    </location>
</feature>
<feature type="modified residue" description="Phosphoserine" evidence="9">
    <location>
        <position position="314"/>
    </location>
</feature>
<feature type="modified residue" description="Phosphoserine" evidence="9">
    <location>
        <position position="317"/>
    </location>
</feature>
<feature type="modified residue" description="Phosphoserine" evidence="7 8 9">
    <location>
        <position position="319"/>
    </location>
</feature>
<feature type="modified residue" description="Phosphothreonine" evidence="9">
    <location>
        <position position="327"/>
    </location>
</feature>
<feature type="sequence conflict" description="In Ref. 4; AAS56365." evidence="6" ref="4">
    <original>K</original>
    <variation>E</variation>
    <location>
        <position position="126"/>
    </location>
</feature>
<feature type="strand" evidence="12">
    <location>
        <begin position="7"/>
        <end position="10"/>
    </location>
</feature>
<feature type="helix" evidence="12">
    <location>
        <begin position="12"/>
        <end position="24"/>
    </location>
</feature>
<feature type="strand" evidence="12">
    <location>
        <begin position="34"/>
        <end position="40"/>
    </location>
</feature>
<feature type="strand" evidence="12">
    <location>
        <begin position="42"/>
        <end position="53"/>
    </location>
</feature>
<feature type="strand" evidence="12">
    <location>
        <begin position="56"/>
        <end position="58"/>
    </location>
</feature>
<feature type="strand" evidence="10">
    <location>
        <begin position="60"/>
        <end position="62"/>
    </location>
</feature>
<feature type="strand" evidence="12">
    <location>
        <begin position="66"/>
        <end position="68"/>
    </location>
</feature>
<feature type="helix" evidence="12">
    <location>
        <begin position="70"/>
        <end position="83"/>
    </location>
</feature>
<feature type="strand" evidence="12">
    <location>
        <begin position="87"/>
        <end position="94"/>
    </location>
</feature>
<feature type="strand" evidence="10">
    <location>
        <begin position="96"/>
        <end position="98"/>
    </location>
</feature>
<feature type="helix" evidence="12">
    <location>
        <begin position="103"/>
        <end position="110"/>
    </location>
</feature>
<feature type="turn" evidence="12">
    <location>
        <begin position="111"/>
        <end position="113"/>
    </location>
</feature>
<feature type="strand" evidence="12">
    <location>
        <begin position="115"/>
        <end position="117"/>
    </location>
</feature>
<feature type="strand" evidence="12">
    <location>
        <begin position="119"/>
        <end position="123"/>
    </location>
</feature>
<feature type="strand" evidence="12">
    <location>
        <begin position="129"/>
        <end position="131"/>
    </location>
</feature>
<feature type="strand" evidence="12">
    <location>
        <begin position="133"/>
        <end position="142"/>
    </location>
</feature>
<feature type="turn" evidence="11">
    <location>
        <begin position="145"/>
        <end position="148"/>
    </location>
</feature>
<feature type="strand" evidence="12">
    <location>
        <begin position="151"/>
        <end position="157"/>
    </location>
</feature>
<feature type="strand" evidence="12">
    <location>
        <begin position="159"/>
        <end position="161"/>
    </location>
</feature>
<feature type="helix" evidence="12">
    <location>
        <begin position="165"/>
        <end position="175"/>
    </location>
</feature>
<feature type="helix" evidence="10">
    <location>
        <begin position="186"/>
        <end position="215"/>
    </location>
</feature>
<feature type="helix" evidence="10">
    <location>
        <begin position="223"/>
        <end position="234"/>
    </location>
</feature>
<feature type="helix" evidence="10">
    <location>
        <begin position="261"/>
        <end position="306"/>
    </location>
</feature>
<sequence>MSLQHEKVTIAPLVLLSALDHYERTQTKENKRCVGVILGDANSSTIRVTNSFALPFEEDEKNSDVWFLDHNYIENMNEMCKKINAKEKLIGWYHSGPKLRASDLKINELFKKYTQNNPLLLIVDVKQQGVGLPTDAYVAIEQVKDDGTSTEKTFLHLPCTIEAEEAEEIGVEHLLRDVRDQAAGGLSIRLTNQLKSLKGLQSKLKDVVEYLDKVINKELPINHTILGKLQDVFNLLPNLGTPDDDEIDVENHDRINISNNLQKALTVKTNDELMVIYISNLVRSIIAFDDLIENKIQNKKIQEQRVKDKQSKVSDDSESESGDKEATAPLIQRKNKKN</sequence>
<protein>
    <recommendedName>
        <fullName>26S proteasome regulatory subunit RPN8</fullName>
    </recommendedName>
</protein>
<name>RPN8_YEAST</name>
<keyword id="KW-0002">3D-structure</keyword>
<keyword id="KW-0007">Acetylation</keyword>
<keyword id="KW-0903">Direct protein sequencing</keyword>
<keyword id="KW-0597">Phosphoprotein</keyword>
<keyword id="KW-0647">Proteasome</keyword>
<keyword id="KW-1185">Reference proteome</keyword>
<reference key="1">
    <citation type="journal article" date="1997" name="Yeast">
        <title>Sequencing analysis of a 36.8 kb fragment of yeast chromosome XV reveals 26 open reading frames including SEC63, CDC31, SUG2, GCD1, RBL2, PNT1, PAC1 and VPH1.</title>
        <authorList>
            <person name="Poirey R."/>
            <person name="Jauniaux J.-C."/>
        </authorList>
    </citation>
    <scope>NUCLEOTIDE SEQUENCE [GENOMIC DNA]</scope>
    <source>
        <strain>ATCC 96604 / S288c / FY1679</strain>
    </source>
</reference>
<reference key="2">
    <citation type="journal article" date="1997" name="Nature">
        <title>The nucleotide sequence of Saccharomyces cerevisiae chromosome XV.</title>
        <authorList>
            <person name="Dujon B."/>
            <person name="Albermann K."/>
            <person name="Aldea M."/>
            <person name="Alexandraki D."/>
            <person name="Ansorge W."/>
            <person name="Arino J."/>
            <person name="Benes V."/>
            <person name="Bohn C."/>
            <person name="Bolotin-Fukuhara M."/>
            <person name="Bordonne R."/>
            <person name="Boyer J."/>
            <person name="Camasses A."/>
            <person name="Casamayor A."/>
            <person name="Casas C."/>
            <person name="Cheret G."/>
            <person name="Cziepluch C."/>
            <person name="Daignan-Fornier B."/>
            <person name="Dang V.-D."/>
            <person name="de Haan M."/>
            <person name="Delius H."/>
            <person name="Durand P."/>
            <person name="Fairhead C."/>
            <person name="Feldmann H."/>
            <person name="Gaillon L."/>
            <person name="Galisson F."/>
            <person name="Gamo F.-J."/>
            <person name="Gancedo C."/>
            <person name="Goffeau A."/>
            <person name="Goulding S.E."/>
            <person name="Grivell L.A."/>
            <person name="Habbig B."/>
            <person name="Hand N.J."/>
            <person name="Hani J."/>
            <person name="Hattenhorst U."/>
            <person name="Hebling U."/>
            <person name="Hernando Y."/>
            <person name="Herrero E."/>
            <person name="Heumann K."/>
            <person name="Hiesel R."/>
            <person name="Hilger F."/>
            <person name="Hofmann B."/>
            <person name="Hollenberg C.P."/>
            <person name="Hughes B."/>
            <person name="Jauniaux J.-C."/>
            <person name="Kalogeropoulos A."/>
            <person name="Katsoulou C."/>
            <person name="Kordes E."/>
            <person name="Lafuente M.J."/>
            <person name="Landt O."/>
            <person name="Louis E.J."/>
            <person name="Maarse A.C."/>
            <person name="Madania A."/>
            <person name="Mannhaupt G."/>
            <person name="Marck C."/>
            <person name="Martin R.P."/>
            <person name="Mewes H.-W."/>
            <person name="Michaux G."/>
            <person name="Paces V."/>
            <person name="Parle-McDermott A.G."/>
            <person name="Pearson B.M."/>
            <person name="Perrin A."/>
            <person name="Pettersson B."/>
            <person name="Poch O."/>
            <person name="Pohl T.M."/>
            <person name="Poirey R."/>
            <person name="Portetelle D."/>
            <person name="Pujol A."/>
            <person name="Purnelle B."/>
            <person name="Ramezani Rad M."/>
            <person name="Rechmann S."/>
            <person name="Schwager C."/>
            <person name="Schweizer M."/>
            <person name="Sor F."/>
            <person name="Sterky F."/>
            <person name="Tarassov I.A."/>
            <person name="Teodoru C."/>
            <person name="Tettelin H."/>
            <person name="Thierry A."/>
            <person name="Tobiasch E."/>
            <person name="Tzermia M."/>
            <person name="Uhlen M."/>
            <person name="Unseld M."/>
            <person name="Valens M."/>
            <person name="Vandenbol M."/>
            <person name="Vetter I."/>
            <person name="Vlcek C."/>
            <person name="Voet M."/>
            <person name="Volckaert G."/>
            <person name="Voss H."/>
            <person name="Wambutt R."/>
            <person name="Wedler H."/>
            <person name="Wiemann S."/>
            <person name="Winsor B."/>
            <person name="Wolfe K.H."/>
            <person name="Zollner A."/>
            <person name="Zumstein E."/>
            <person name="Kleine K."/>
        </authorList>
    </citation>
    <scope>NUCLEOTIDE SEQUENCE [LARGE SCALE GENOMIC DNA]</scope>
    <source>
        <strain>ATCC 204508 / S288c</strain>
    </source>
</reference>
<reference key="3">
    <citation type="journal article" date="2014" name="G3 (Bethesda)">
        <title>The reference genome sequence of Saccharomyces cerevisiae: Then and now.</title>
        <authorList>
            <person name="Engel S.R."/>
            <person name="Dietrich F.S."/>
            <person name="Fisk D.G."/>
            <person name="Binkley G."/>
            <person name="Balakrishnan R."/>
            <person name="Costanzo M.C."/>
            <person name="Dwight S.S."/>
            <person name="Hitz B.C."/>
            <person name="Karra K."/>
            <person name="Nash R.S."/>
            <person name="Weng S."/>
            <person name="Wong E.D."/>
            <person name="Lloyd P."/>
            <person name="Skrzypek M.S."/>
            <person name="Miyasato S.R."/>
            <person name="Simison M."/>
            <person name="Cherry J.M."/>
        </authorList>
    </citation>
    <scope>GENOME REANNOTATION</scope>
    <source>
        <strain>ATCC 204508 / S288c</strain>
    </source>
</reference>
<reference key="4">
    <citation type="journal article" date="2007" name="Genome Res.">
        <title>Approaching a complete repository of sequence-verified protein-encoding clones for Saccharomyces cerevisiae.</title>
        <authorList>
            <person name="Hu Y."/>
            <person name="Rolfs A."/>
            <person name="Bhullar B."/>
            <person name="Murthy T.V.S."/>
            <person name="Zhu C."/>
            <person name="Berger M.F."/>
            <person name="Camargo A.A."/>
            <person name="Kelley F."/>
            <person name="McCarron S."/>
            <person name="Jepson D."/>
            <person name="Richardson A."/>
            <person name="Raphael J."/>
            <person name="Moreira D."/>
            <person name="Taycher E."/>
            <person name="Zuo D."/>
            <person name="Mohr S."/>
            <person name="Kane M.F."/>
            <person name="Williamson J."/>
            <person name="Simpson A.J.G."/>
            <person name="Bulyk M.L."/>
            <person name="Harlow E."/>
            <person name="Marsischky G."/>
            <person name="Kolodner R.D."/>
            <person name="LaBaer J."/>
        </authorList>
    </citation>
    <scope>NUCLEOTIDE SEQUENCE [GENOMIC DNA]</scope>
    <source>
        <strain>ATCC 204508 / S288c</strain>
    </source>
</reference>
<reference key="5">
    <citation type="journal article" date="2003" name="Arch. Biochem. Biophys.">
        <title>N-terminal modifications of the 19S regulatory particle subunits of the yeast proteasome.</title>
        <authorList>
            <person name="Kimura Y."/>
            <person name="Saeki Y."/>
            <person name="Yokosawa H."/>
            <person name="Polevoda B."/>
            <person name="Sherman F."/>
            <person name="Hirano H."/>
        </authorList>
    </citation>
    <scope>PROTEIN SEQUENCE OF 2-9</scope>
    <scope>ACETYLATION AT SER-2</scope>
</reference>
<reference key="6">
    <citation type="journal article" date="1998" name="Mol. Cell. Biol.">
        <title>The regulatory particle of the Saccharomyces cerevisiae proteasome.</title>
        <authorList>
            <person name="Glickman M.H."/>
            <person name="Rubin D.M."/>
            <person name="Fried V.A."/>
            <person name="Finley D."/>
        </authorList>
    </citation>
    <scope>FUNCTION</scope>
</reference>
<reference key="7">
    <citation type="journal article" date="2003" name="Nature">
        <title>Global analysis of protein expression in yeast.</title>
        <authorList>
            <person name="Ghaemmaghami S."/>
            <person name="Huh W.-K."/>
            <person name="Bower K."/>
            <person name="Howson R.W."/>
            <person name="Belle A."/>
            <person name="Dephoure N."/>
            <person name="O'Shea E.K."/>
            <person name="Weissman J.S."/>
        </authorList>
    </citation>
    <scope>LEVEL OF PROTEIN EXPRESSION [LARGE SCALE ANALYSIS]</scope>
</reference>
<reference key="8">
    <citation type="journal article" date="2005" name="Mol. Cell. Proteomics">
        <title>Quantitative phosphoproteomics applied to the yeast pheromone signaling pathway.</title>
        <authorList>
            <person name="Gruhler A."/>
            <person name="Olsen J.V."/>
            <person name="Mohammed S."/>
            <person name="Mortensen P."/>
            <person name="Faergeman N.J."/>
            <person name="Mann M."/>
            <person name="Jensen O.N."/>
        </authorList>
    </citation>
    <scope>PHOSPHORYLATION [LARGE SCALE ANALYSIS] AT SER-319</scope>
    <scope>IDENTIFICATION BY MASS SPECTROMETRY [LARGE SCALE ANALYSIS]</scope>
    <source>
        <strain>YAL6B</strain>
    </source>
</reference>
<reference key="9">
    <citation type="journal article" date="2007" name="J. Proteome Res.">
        <title>Large-scale phosphorylation analysis of alpha-factor-arrested Saccharomyces cerevisiae.</title>
        <authorList>
            <person name="Li X."/>
            <person name="Gerber S.A."/>
            <person name="Rudner A.D."/>
            <person name="Beausoleil S.A."/>
            <person name="Haas W."/>
            <person name="Villen J."/>
            <person name="Elias J.E."/>
            <person name="Gygi S.P."/>
        </authorList>
    </citation>
    <scope>PHOSPHORYLATION [LARGE SCALE ANALYSIS] AT SER-319</scope>
    <scope>IDENTIFICATION BY MASS SPECTROMETRY [LARGE SCALE ANALYSIS]</scope>
    <source>
        <strain>ADR376</strain>
    </source>
</reference>
<reference key="10">
    <citation type="journal article" date="2008" name="Mol. Cell. Proteomics">
        <title>A multidimensional chromatography technology for in-depth phosphoproteome analysis.</title>
        <authorList>
            <person name="Albuquerque C.P."/>
            <person name="Smolka M.B."/>
            <person name="Payne S.H."/>
            <person name="Bafna V."/>
            <person name="Eng J."/>
            <person name="Zhou H."/>
        </authorList>
    </citation>
    <scope>IDENTIFICATION BY MASS SPECTROMETRY [LARGE SCALE ANALYSIS]</scope>
</reference>
<reference key="11">
    <citation type="journal article" date="2009" name="Science">
        <title>Global analysis of Cdk1 substrate phosphorylation sites provides insights into evolution.</title>
        <authorList>
            <person name="Holt L.J."/>
            <person name="Tuch B.B."/>
            <person name="Villen J."/>
            <person name="Johnson A.D."/>
            <person name="Gygi S.P."/>
            <person name="Morgan D.O."/>
        </authorList>
    </citation>
    <scope>PHOSPHORYLATION [LARGE SCALE ANALYSIS] AT SER-314; SER-317; SER-319 AND THR-327</scope>
    <scope>IDENTIFICATION BY MASS SPECTROMETRY [LARGE SCALE ANALYSIS]</scope>
</reference>
<reference key="12">
    <citation type="journal article" date="2012" name="Proc. Natl. Acad. Sci. U.S.A.">
        <title>Near-atomic resolution structural model of the yeast 26S proteasome.</title>
        <authorList>
            <person name="Beck F."/>
            <person name="Unverdorben P."/>
            <person name="Bohn S."/>
            <person name="Schweitzer A."/>
            <person name="Pfeifer G."/>
            <person name="Sakata E."/>
            <person name="Nickell S."/>
            <person name="Plitzko J.M."/>
            <person name="Villa E."/>
            <person name="Baumeister W."/>
            <person name="Forster F."/>
        </authorList>
    </citation>
    <scope>STRUCTURE BY ELECTRON MICROSCOPY (7.4 ANGSTROMS) OF THE 26S PROTEASOME</scope>
</reference>
<proteinExistence type="evidence at protein level"/>
<dbReference type="EMBL" id="Z75169">
    <property type="protein sequence ID" value="CAA99483.1"/>
    <property type="molecule type" value="Genomic_DNA"/>
</dbReference>
<dbReference type="EMBL" id="AY558039">
    <property type="protein sequence ID" value="AAS56365.1"/>
    <property type="molecule type" value="Genomic_DNA"/>
</dbReference>
<dbReference type="EMBL" id="BK006948">
    <property type="protein sequence ID" value="DAA11028.1"/>
    <property type="molecule type" value="Genomic_DNA"/>
</dbReference>
<dbReference type="PIR" id="S67158">
    <property type="entry name" value="S67158"/>
</dbReference>
<dbReference type="RefSeq" id="NP_014904.3">
    <property type="nucleotide sequence ID" value="NM_001183680.3"/>
</dbReference>
<dbReference type="PDB" id="3J47">
    <property type="method" value="EM"/>
    <property type="chains" value="U=188-308"/>
</dbReference>
<dbReference type="PDB" id="3JCK">
    <property type="method" value="EM"/>
    <property type="resolution" value="3.50 A"/>
    <property type="chains" value="E=1-338"/>
</dbReference>
<dbReference type="PDB" id="3JCO">
    <property type="method" value="EM"/>
    <property type="resolution" value="4.80 A"/>
    <property type="chains" value="U=1-338"/>
</dbReference>
<dbReference type="PDB" id="3JCP">
    <property type="method" value="EM"/>
    <property type="resolution" value="4.60 A"/>
    <property type="chains" value="U=1-338"/>
</dbReference>
<dbReference type="PDB" id="4CR2">
    <property type="method" value="EM"/>
    <property type="resolution" value="7.70 A"/>
    <property type="chains" value="U=1-338"/>
</dbReference>
<dbReference type="PDB" id="4CR3">
    <property type="method" value="EM"/>
    <property type="resolution" value="9.30 A"/>
    <property type="chains" value="U=1-338"/>
</dbReference>
<dbReference type="PDB" id="4CR4">
    <property type="method" value="EM"/>
    <property type="resolution" value="8.80 A"/>
    <property type="chains" value="U=1-338"/>
</dbReference>
<dbReference type="PDB" id="4O8X">
    <property type="method" value="X-ray"/>
    <property type="resolution" value="1.99 A"/>
    <property type="chains" value="A=2-178"/>
</dbReference>
<dbReference type="PDB" id="4O8Y">
    <property type="method" value="X-ray"/>
    <property type="resolution" value="1.95 A"/>
    <property type="chains" value="A=2-178"/>
</dbReference>
<dbReference type="PDB" id="4OCL">
    <property type="method" value="X-ray"/>
    <property type="resolution" value="2.40 A"/>
    <property type="chains" value="A/D=1-176"/>
</dbReference>
<dbReference type="PDB" id="4OCM">
    <property type="method" value="X-ray"/>
    <property type="resolution" value="1.99 A"/>
    <property type="chains" value="A/D=1-176"/>
</dbReference>
<dbReference type="PDB" id="4OCN">
    <property type="method" value="X-ray"/>
    <property type="resolution" value="2.25 A"/>
    <property type="chains" value="A/D=1-176"/>
</dbReference>
<dbReference type="PDB" id="4OWP">
    <property type="method" value="X-ray"/>
    <property type="resolution" value="2.35 A"/>
    <property type="chains" value="A=1-186"/>
</dbReference>
<dbReference type="PDB" id="5A5B">
    <property type="method" value="EM"/>
    <property type="resolution" value="9.50 A"/>
    <property type="chains" value="U=1-338"/>
</dbReference>
<dbReference type="PDB" id="5MPB">
    <property type="method" value="EM"/>
    <property type="resolution" value="7.80 A"/>
    <property type="chains" value="U=1-338"/>
</dbReference>
<dbReference type="PDB" id="5MPC">
    <property type="method" value="EM"/>
    <property type="resolution" value="7.70 A"/>
    <property type="chains" value="U=1-338"/>
</dbReference>
<dbReference type="PDB" id="5MPD">
    <property type="method" value="EM"/>
    <property type="resolution" value="4.10 A"/>
    <property type="chains" value="U=1-338"/>
</dbReference>
<dbReference type="PDB" id="5MPE">
    <property type="method" value="EM"/>
    <property type="resolution" value="4.50 A"/>
    <property type="chains" value="U=1-338"/>
</dbReference>
<dbReference type="PDB" id="5U4P">
    <property type="method" value="X-ray"/>
    <property type="resolution" value="2.50 A"/>
    <property type="chains" value="A=1-177"/>
</dbReference>
<dbReference type="PDB" id="5W83">
    <property type="method" value="X-ray"/>
    <property type="resolution" value="1.55 A"/>
    <property type="chains" value="A=1-338"/>
</dbReference>
<dbReference type="PDB" id="5WVI">
    <property type="method" value="EM"/>
    <property type="resolution" value="6.30 A"/>
    <property type="chains" value="U=1-338"/>
</dbReference>
<dbReference type="PDB" id="5WVK">
    <property type="method" value="EM"/>
    <property type="resolution" value="4.20 A"/>
    <property type="chains" value="U=1-338"/>
</dbReference>
<dbReference type="PDB" id="6FVT">
    <property type="method" value="EM"/>
    <property type="resolution" value="4.10 A"/>
    <property type="chains" value="U=1-304"/>
</dbReference>
<dbReference type="PDB" id="6FVU">
    <property type="method" value="EM"/>
    <property type="resolution" value="4.50 A"/>
    <property type="chains" value="U=1-304"/>
</dbReference>
<dbReference type="PDB" id="6FVV">
    <property type="method" value="EM"/>
    <property type="resolution" value="5.40 A"/>
    <property type="chains" value="U=1-304"/>
</dbReference>
<dbReference type="PDB" id="6FVW">
    <property type="method" value="EM"/>
    <property type="resolution" value="4.50 A"/>
    <property type="chains" value="U=1-304"/>
</dbReference>
<dbReference type="PDB" id="6FVX">
    <property type="method" value="EM"/>
    <property type="resolution" value="4.90 A"/>
    <property type="chains" value="U=1-304"/>
</dbReference>
<dbReference type="PDB" id="6FVY">
    <property type="method" value="EM"/>
    <property type="resolution" value="6.10 A"/>
    <property type="chains" value="U=1-304"/>
</dbReference>
<dbReference type="PDB" id="6J2C">
    <property type="method" value="EM"/>
    <property type="resolution" value="7.00 A"/>
    <property type="chains" value="U=1-338"/>
</dbReference>
<dbReference type="PDB" id="6J2N">
    <property type="method" value="EM"/>
    <property type="resolution" value="7.50 A"/>
    <property type="chains" value="U=1-338"/>
</dbReference>
<dbReference type="PDB" id="6J2Q">
    <property type="method" value="EM"/>
    <property type="resolution" value="3.80 A"/>
    <property type="chains" value="U=1-338"/>
</dbReference>
<dbReference type="PDB" id="6J2X">
    <property type="method" value="EM"/>
    <property type="resolution" value="3.80 A"/>
    <property type="chains" value="U=1-338"/>
</dbReference>
<dbReference type="PDB" id="6J30">
    <property type="method" value="EM"/>
    <property type="resolution" value="4.50 A"/>
    <property type="chains" value="U=1-338"/>
</dbReference>
<dbReference type="PDB" id="7QO3">
    <property type="method" value="EM"/>
    <property type="resolution" value="6.10 A"/>
    <property type="chains" value="U=1-338"/>
</dbReference>
<dbReference type="PDB" id="7QO5">
    <property type="method" value="EM"/>
    <property type="resolution" value="6.00 A"/>
    <property type="chains" value="U=1-338"/>
</dbReference>
<dbReference type="PDB" id="7QO6">
    <property type="method" value="EM"/>
    <property type="resolution" value="6.30 A"/>
    <property type="chains" value="U=1-338"/>
</dbReference>
<dbReference type="PDBsum" id="3J47"/>
<dbReference type="PDBsum" id="3JCK"/>
<dbReference type="PDBsum" id="3JCO"/>
<dbReference type="PDBsum" id="3JCP"/>
<dbReference type="PDBsum" id="4CR2"/>
<dbReference type="PDBsum" id="4CR3"/>
<dbReference type="PDBsum" id="4CR4"/>
<dbReference type="PDBsum" id="4O8X"/>
<dbReference type="PDBsum" id="4O8Y"/>
<dbReference type="PDBsum" id="4OCL"/>
<dbReference type="PDBsum" id="4OCM"/>
<dbReference type="PDBsum" id="4OCN"/>
<dbReference type="PDBsum" id="4OWP"/>
<dbReference type="PDBsum" id="5A5B"/>
<dbReference type="PDBsum" id="5MPB"/>
<dbReference type="PDBsum" id="5MPC"/>
<dbReference type="PDBsum" id="5MPD"/>
<dbReference type="PDBsum" id="5MPE"/>
<dbReference type="PDBsum" id="5U4P"/>
<dbReference type="PDBsum" id="5W83"/>
<dbReference type="PDBsum" id="5WVI"/>
<dbReference type="PDBsum" id="5WVK"/>
<dbReference type="PDBsum" id="6FVT"/>
<dbReference type="PDBsum" id="6FVU"/>
<dbReference type="PDBsum" id="6FVV"/>
<dbReference type="PDBsum" id="6FVW"/>
<dbReference type="PDBsum" id="6FVX"/>
<dbReference type="PDBsum" id="6FVY"/>
<dbReference type="PDBsum" id="6J2C"/>
<dbReference type="PDBsum" id="6J2N"/>
<dbReference type="PDBsum" id="6J2Q"/>
<dbReference type="PDBsum" id="6J2X"/>
<dbReference type="PDBsum" id="6J30"/>
<dbReference type="PDBsum" id="7QO3"/>
<dbReference type="PDBsum" id="7QO5"/>
<dbReference type="PDBsum" id="7QO6"/>
<dbReference type="EMDB" id="EMD-14082"/>
<dbReference type="EMDB" id="EMD-14084"/>
<dbReference type="EMDB" id="EMD-14085"/>
<dbReference type="EMDB" id="EMD-3136"/>
<dbReference type="EMDB" id="EMD-3536"/>
<dbReference type="EMDB" id="EMD-3537"/>
<dbReference type="EMDB" id="EMD-4321"/>
<dbReference type="EMDB" id="EMD-4322"/>
<dbReference type="EMDB" id="EMD-4323"/>
<dbReference type="EMDB" id="EMD-4324"/>
<dbReference type="EMDB" id="EMD-6693"/>
<dbReference type="EMDB" id="EMD-6694"/>
<dbReference type="EMDB" id="EMD-9769"/>
<dbReference type="EMDB" id="EMD-9770"/>
<dbReference type="EMDB" id="EMD-9771"/>
<dbReference type="EMDB" id="EMD-9772"/>
<dbReference type="EMDB" id="EMD-9773"/>
<dbReference type="SMR" id="Q08723"/>
<dbReference type="BioGRID" id="34651">
    <property type="interactions" value="488"/>
</dbReference>
<dbReference type="ComplexPortal" id="CPX-2262">
    <property type="entry name" value="26S proteasome complex"/>
</dbReference>
<dbReference type="DIP" id="DIP-1574N"/>
<dbReference type="FunCoup" id="Q08723">
    <property type="interactions" value="1303"/>
</dbReference>
<dbReference type="IntAct" id="Q08723">
    <property type="interactions" value="57"/>
</dbReference>
<dbReference type="MINT" id="Q08723"/>
<dbReference type="STRING" id="4932.YOR261C"/>
<dbReference type="MEROPS" id="M67.973"/>
<dbReference type="iPTMnet" id="Q08723"/>
<dbReference type="PaxDb" id="4932-YOR261C"/>
<dbReference type="PeptideAtlas" id="Q08723"/>
<dbReference type="ABCD" id="Q08723">
    <property type="antibodies" value="1 sequenced antibody"/>
</dbReference>
<dbReference type="EnsemblFungi" id="YOR261C_mRNA">
    <property type="protein sequence ID" value="YOR261C"/>
    <property type="gene ID" value="YOR261C"/>
</dbReference>
<dbReference type="GeneID" id="854435"/>
<dbReference type="KEGG" id="sce:YOR261C"/>
<dbReference type="AGR" id="SGD:S000005787"/>
<dbReference type="SGD" id="S000005787">
    <property type="gene designation" value="RPN8"/>
</dbReference>
<dbReference type="VEuPathDB" id="FungiDB:YOR261C"/>
<dbReference type="eggNOG" id="KOG1556">
    <property type="taxonomic scope" value="Eukaryota"/>
</dbReference>
<dbReference type="GeneTree" id="ENSGT00950000183073"/>
<dbReference type="HOGENOM" id="CLU_027018_3_0_1"/>
<dbReference type="InParanoid" id="Q08723"/>
<dbReference type="OMA" id="HAMSIKT"/>
<dbReference type="OrthoDB" id="10256771at2759"/>
<dbReference type="BioCyc" id="YEAST:G3O-33752-MONOMER"/>
<dbReference type="Reactome" id="R-SCE-1236978">
    <property type="pathway name" value="Cross-presentation of soluble exogenous antigens (endosomes)"/>
</dbReference>
<dbReference type="Reactome" id="R-SCE-5668541">
    <property type="pathway name" value="TNFR2 non-canonical NF-kB pathway"/>
</dbReference>
<dbReference type="Reactome" id="R-SCE-5687128">
    <property type="pathway name" value="MAPK6/MAPK4 signaling"/>
</dbReference>
<dbReference type="Reactome" id="R-SCE-5689880">
    <property type="pathway name" value="Ub-specific processing proteases"/>
</dbReference>
<dbReference type="Reactome" id="R-SCE-6798695">
    <property type="pathway name" value="Neutrophil degranulation"/>
</dbReference>
<dbReference type="Reactome" id="R-SCE-68949">
    <property type="pathway name" value="Orc1 removal from chromatin"/>
</dbReference>
<dbReference type="Reactome" id="R-SCE-69017">
    <property type="pathway name" value="CDK-mediated phosphorylation and removal of Cdc6"/>
</dbReference>
<dbReference type="Reactome" id="R-SCE-69601">
    <property type="pathway name" value="Ubiquitin Mediated Degradation of Phosphorylated Cdc25A"/>
</dbReference>
<dbReference type="Reactome" id="R-SCE-8854050">
    <property type="pathway name" value="FBXL7 down-regulates AURKA during mitotic entry and in early mitosis"/>
</dbReference>
<dbReference type="Reactome" id="R-SCE-8948751">
    <property type="pathway name" value="Regulation of PTEN stability and activity"/>
</dbReference>
<dbReference type="Reactome" id="R-SCE-8951664">
    <property type="pathway name" value="Neddylation"/>
</dbReference>
<dbReference type="Reactome" id="R-SCE-9755511">
    <property type="pathway name" value="KEAP1-NFE2L2 pathway"/>
</dbReference>
<dbReference type="Reactome" id="R-SCE-983168">
    <property type="pathway name" value="Antigen processing: Ubiquitination &amp; Proteasome degradation"/>
</dbReference>
<dbReference type="Reactome" id="R-SCE-9907900">
    <property type="pathway name" value="Proteasome assembly"/>
</dbReference>
<dbReference type="BioGRID-ORCS" id="854435">
    <property type="hits" value="1 hit in 10 CRISPR screens"/>
</dbReference>
<dbReference type="EvolutionaryTrace" id="Q08723"/>
<dbReference type="PRO" id="PR:Q08723"/>
<dbReference type="Proteomes" id="UP000002311">
    <property type="component" value="Chromosome XV"/>
</dbReference>
<dbReference type="RNAct" id="Q08723">
    <property type="molecule type" value="protein"/>
</dbReference>
<dbReference type="GO" id="GO:0000502">
    <property type="term" value="C:proteasome complex"/>
    <property type="evidence" value="ECO:0000353"/>
    <property type="project" value="ComplexPortal"/>
</dbReference>
<dbReference type="GO" id="GO:0008541">
    <property type="term" value="C:proteasome regulatory particle, lid subcomplex"/>
    <property type="evidence" value="ECO:0000314"/>
    <property type="project" value="SGD"/>
</dbReference>
<dbReference type="GO" id="GO:0034515">
    <property type="term" value="C:proteasome storage granule"/>
    <property type="evidence" value="ECO:0000314"/>
    <property type="project" value="SGD"/>
</dbReference>
<dbReference type="GO" id="GO:0008237">
    <property type="term" value="F:metallopeptidase activity"/>
    <property type="evidence" value="ECO:0007669"/>
    <property type="project" value="InterPro"/>
</dbReference>
<dbReference type="GO" id="GO:0043161">
    <property type="term" value="P:proteasome-mediated ubiquitin-dependent protein catabolic process"/>
    <property type="evidence" value="ECO:0000314"/>
    <property type="project" value="ComplexPortal"/>
</dbReference>
<dbReference type="GO" id="GO:0006511">
    <property type="term" value="P:ubiquitin-dependent protein catabolic process"/>
    <property type="evidence" value="ECO:0000304"/>
    <property type="project" value="SGD"/>
</dbReference>
<dbReference type="CDD" id="cd08062">
    <property type="entry name" value="MPN_RPN7_8"/>
    <property type="match status" value="1"/>
</dbReference>
<dbReference type="FunFam" id="3.40.140.10:FF:000004">
    <property type="entry name" value="26S proteasome regulatory subunit rpn-8"/>
    <property type="match status" value="1"/>
</dbReference>
<dbReference type="Gene3D" id="3.40.140.10">
    <property type="entry name" value="Cytidine Deaminase, domain 2"/>
    <property type="match status" value="1"/>
</dbReference>
<dbReference type="InterPro" id="IPR024969">
    <property type="entry name" value="EIF3F/CSN6-like_C"/>
</dbReference>
<dbReference type="InterPro" id="IPR000555">
    <property type="entry name" value="JAMM/MPN+_dom"/>
</dbReference>
<dbReference type="InterPro" id="IPR037518">
    <property type="entry name" value="MPN"/>
</dbReference>
<dbReference type="InterPro" id="IPR033858">
    <property type="entry name" value="MPN_RPN7_8"/>
</dbReference>
<dbReference type="PANTHER" id="PTHR10540:SF7">
    <property type="entry name" value="26S PROTEASOME NON-ATPASE REGULATORY SUBUNIT 7"/>
    <property type="match status" value="1"/>
</dbReference>
<dbReference type="PANTHER" id="PTHR10540">
    <property type="entry name" value="EUKARYOTIC TRANSLATION INITIATION FACTOR 3 SUBUNIT F-RELATED"/>
    <property type="match status" value="1"/>
</dbReference>
<dbReference type="Pfam" id="PF01398">
    <property type="entry name" value="JAB"/>
    <property type="match status" value="1"/>
</dbReference>
<dbReference type="Pfam" id="PF13012">
    <property type="entry name" value="MitMem_reg"/>
    <property type="match status" value="1"/>
</dbReference>
<dbReference type="SMART" id="SM00232">
    <property type="entry name" value="JAB_MPN"/>
    <property type="match status" value="1"/>
</dbReference>
<dbReference type="PROSITE" id="PS50249">
    <property type="entry name" value="MPN"/>
    <property type="match status" value="1"/>
</dbReference>
<accession>Q08723</accession>
<accession>D6W2W2</accession>
<accession>Q6Q5I7</accession>
<comment type="function">
    <text evidence="5">Acts as a regulatory subunit of the 26S proteasome which is involved in the ATP-dependent degradation of ubiquitinated proteins.</text>
</comment>
<comment type="interaction">
    <interactant intactId="EBI-36176">
        <id>Q08723</id>
    </interactant>
    <interactant intactId="EBI-21152">
        <id>P38348</id>
        <label>HSM3</label>
    </interactant>
    <organismsDiffer>false</organismsDiffer>
    <experiments>5</experiments>
</comment>
<comment type="interaction">
    <interactant intactId="EBI-36176">
        <id>Q08723</id>
    </interactant>
    <interactant intactId="EBI-11219">
        <id>P43588</id>
        <label>RPN11</label>
    </interactant>
    <organismsDiffer>false</organismsDiffer>
    <experiments>10</experiments>
</comment>
<comment type="interaction">
    <interactant intactId="EBI-36176">
        <id>Q08723</id>
    </interactant>
    <interactant intactId="EBI-15953">
        <id>P32496</id>
        <label>RPN12</label>
    </interactant>
    <organismsDiffer>false</organismsDiffer>
    <experiments>4</experiments>
</comment>
<comment type="interaction">
    <interactant intactId="EBI-36176">
        <id>Q08723</id>
    </interactant>
    <interactant intactId="EBI-15935">
        <id>Q12250</id>
        <label>RPN5</label>
    </interactant>
    <organismsDiffer>false</organismsDiffer>
    <experiments>9</experiments>
</comment>
<comment type="interaction">
    <interactant intactId="EBI-36176">
        <id>Q08723</id>
    </interactant>
    <interactant intactId="EBI-308">
        <id>Q12377</id>
        <label>RPN6</label>
    </interactant>
    <organismsDiffer>false</organismsDiffer>
    <experiments>4</experiments>
</comment>
<comment type="interaction">
    <interactant intactId="EBI-36176">
        <id>Q08723</id>
    </interactant>
    <interactant intactId="EBI-15944">
        <id>Q04062</id>
        <label>RPN9</label>
    </interactant>
    <organismsDiffer>false</organismsDiffer>
    <experiments>6</experiments>
</comment>
<comment type="PTM">
    <text evidence="3">N-acetylated by NAT1.</text>
</comment>
<comment type="miscellaneous">
    <text evidence="4">Present with 19800 molecules/cell in log phase SD medium.</text>
</comment>
<comment type="similarity">
    <text evidence="6">Belongs to the peptidase M67A family.</text>
</comment>
<evidence type="ECO:0000255" key="1">
    <source>
        <dbReference type="PROSITE-ProRule" id="PRU01182"/>
    </source>
</evidence>
<evidence type="ECO:0000256" key="2">
    <source>
        <dbReference type="SAM" id="MobiDB-lite"/>
    </source>
</evidence>
<evidence type="ECO:0000269" key="3">
    <source>
    </source>
</evidence>
<evidence type="ECO:0000269" key="4">
    <source>
    </source>
</evidence>
<evidence type="ECO:0000269" key="5">
    <source>
    </source>
</evidence>
<evidence type="ECO:0000305" key="6"/>
<evidence type="ECO:0007744" key="7">
    <source>
    </source>
</evidence>
<evidence type="ECO:0007744" key="8">
    <source>
    </source>
</evidence>
<evidence type="ECO:0007744" key="9">
    <source>
    </source>
</evidence>
<evidence type="ECO:0007829" key="10">
    <source>
        <dbReference type="PDB" id="3JCK"/>
    </source>
</evidence>
<evidence type="ECO:0007829" key="11">
    <source>
        <dbReference type="PDB" id="4OCN"/>
    </source>
</evidence>
<evidence type="ECO:0007829" key="12">
    <source>
        <dbReference type="PDB" id="5W83"/>
    </source>
</evidence>